<proteinExistence type="evidence at protein level"/>
<evidence type="ECO:0000250" key="1">
    <source>
        <dbReference type="UniProtKB" id="Q2G2U4"/>
    </source>
</evidence>
<evidence type="ECO:0000255" key="2"/>
<evidence type="ECO:0000255" key="3">
    <source>
        <dbReference type="PROSITE-ProRule" id="PRU00102"/>
    </source>
</evidence>
<evidence type="ECO:0000255" key="4">
    <source>
        <dbReference type="PROSITE-ProRule" id="PRU00107"/>
    </source>
</evidence>
<evidence type="ECO:0000255" key="5">
    <source>
        <dbReference type="PROSITE-ProRule" id="PRU00141"/>
    </source>
</evidence>
<evidence type="ECO:0000269" key="6">
    <source>
    </source>
</evidence>
<evidence type="ECO:0000269" key="7">
    <source>
    </source>
</evidence>
<evidence type="ECO:0000269" key="8">
    <source>
    </source>
</evidence>
<evidence type="ECO:0000269" key="9">
    <source>
    </source>
</evidence>
<evidence type="ECO:0000269" key="10">
    <source>
    </source>
</evidence>
<evidence type="ECO:0000269" key="11">
    <source>
    </source>
</evidence>
<evidence type="ECO:0000305" key="12"/>
<evidence type="ECO:0000305" key="13">
    <source>
    </source>
</evidence>
<evidence type="ECO:0000312" key="14">
    <source>
        <dbReference type="EMBL" id="CAB16077.1"/>
    </source>
</evidence>
<evidence type="ECO:0007829" key="15">
    <source>
        <dbReference type="PDB" id="3SL2"/>
    </source>
</evidence>
<organism>
    <name type="scientific">Bacillus subtilis (strain 168)</name>
    <dbReference type="NCBI Taxonomy" id="224308"/>
    <lineage>
        <taxon>Bacteria</taxon>
        <taxon>Bacillati</taxon>
        <taxon>Bacillota</taxon>
        <taxon>Bacilli</taxon>
        <taxon>Bacillales</taxon>
        <taxon>Bacillaceae</taxon>
        <taxon>Bacillus</taxon>
    </lineage>
</organism>
<sequence>MNKVGFFRSIQFKITLIYVLLIIIAMQIIGVYFVNQVEKSLISSYEQSLNQRIDNLSYYIEQEYKSDNDSTVIKDDVSRILNDFTKSDEVREISFVDKSYEVVGSSKPYGEEVAGKQTTDLIFKRIFSTKQSYLRKYYDPKSKIRVLISAKPVMTENQEVVGAIYVVASMEDVFNQMKTINTILASGTGLALVLTALLGIFLARTITHPLSDMRKQAMELAKGNFSRKVKKYGHDEIGQLATTFNHLTRELEDAQAMTEGERRKLASVIAYMTDGVIATNRNGAIILLNSPALELLNVSRETALEMPITSLLGLQENYTFEDLVEQQDSMLLEIERDDELTVLRVNFSVIQREHGKIDGLIAVIYDVTEQEKMDQERREFVANVSHELRTPLTTMRSYLEALAEGAWENKDIAPRFLMVTQNETERMIRLVNDLLQLSKFDSKDYQFNREWIQIVRFMSLIIDRFEMTKEQHVEFIRNLPDRDLYVEIDQDKITQVLDNIISNALKYSPEGGHVTFSIDVNEEEELLYISVKDEGIGIPKKDVEKVFDRFYRVDKARTRKLGGTGLGLAIAKEMVQAHGGDIWADSIEGKGTTITFTLPYKEEQEDDWDEA</sequence>
<gene>
    <name evidence="1 14" type="primary">walK</name>
    <name type="synonym">yycG</name>
    <name type="ordered locus">BSU40400</name>
</gene>
<accession>Q45614</accession>
<feature type="chain" id="PRO_0000074918" description="Sensor histidine kinase WalK">
    <location>
        <begin position="1"/>
        <end position="611"/>
    </location>
</feature>
<feature type="topological domain" description="Cytoplasmic" evidence="2">
    <location>
        <begin position="1"/>
        <end position="13"/>
    </location>
</feature>
<feature type="transmembrane region" description="Helical" evidence="2">
    <location>
        <begin position="14"/>
        <end position="34"/>
    </location>
</feature>
<feature type="topological domain" description="Extracellular" evidence="2">
    <location>
        <begin position="35"/>
        <end position="182"/>
    </location>
</feature>
<feature type="transmembrane region" description="Helical" evidence="2">
    <location>
        <begin position="183"/>
        <end position="203"/>
    </location>
</feature>
<feature type="topological domain" description="Cytoplasmic" evidence="2">
    <location>
        <begin position="204"/>
        <end position="611"/>
    </location>
</feature>
<feature type="domain" description="HAMP" evidence="3">
    <location>
        <begin position="204"/>
        <end position="256"/>
    </location>
</feature>
<feature type="domain" description="PAS" evidence="12">
    <location>
        <begin position="263"/>
        <end position="324"/>
    </location>
</feature>
<feature type="domain" description="PAC" evidence="5">
    <location>
        <begin position="325"/>
        <end position="379"/>
    </location>
</feature>
<feature type="domain" description="Histidine kinase" evidence="4">
    <location>
        <begin position="383"/>
        <end position="602"/>
    </location>
</feature>
<feature type="modified residue" description="Phosphohistidine; by autocatalysis" evidence="13">
    <location>
        <position position="386"/>
    </location>
</feature>
<feature type="mutagenesis site" description="Loss of phosphorylation." evidence="7">
    <original>H</original>
    <variation>R</variation>
    <variation>A</variation>
    <location>
        <position position="386"/>
    </location>
</feature>
<feature type="strand" evidence="15">
    <location>
        <begin position="451"/>
        <end position="453"/>
    </location>
</feature>
<feature type="helix" evidence="15">
    <location>
        <begin position="454"/>
        <end position="466"/>
    </location>
</feature>
<feature type="strand" evidence="15">
    <location>
        <begin position="475"/>
        <end position="478"/>
    </location>
</feature>
<feature type="strand" evidence="15">
    <location>
        <begin position="485"/>
        <end position="488"/>
    </location>
</feature>
<feature type="helix" evidence="15">
    <location>
        <begin position="490"/>
        <end position="506"/>
    </location>
</feature>
<feature type="strand" evidence="15">
    <location>
        <begin position="514"/>
        <end position="521"/>
    </location>
</feature>
<feature type="turn" evidence="15">
    <location>
        <begin position="522"/>
        <end position="525"/>
    </location>
</feature>
<feature type="strand" evidence="15">
    <location>
        <begin position="526"/>
        <end position="532"/>
    </location>
</feature>
<feature type="turn" evidence="15">
    <location>
        <begin position="540"/>
        <end position="547"/>
    </location>
</feature>
<feature type="helix" evidence="15">
    <location>
        <begin position="567"/>
        <end position="577"/>
    </location>
</feature>
<feature type="strand" evidence="15">
    <location>
        <begin position="582"/>
        <end position="587"/>
    </location>
</feature>
<feature type="turn" evidence="15">
    <location>
        <begin position="588"/>
        <end position="590"/>
    </location>
</feature>
<feature type="strand" evidence="15">
    <location>
        <begin position="591"/>
        <end position="601"/>
    </location>
</feature>
<name>WALK_BACSU</name>
<keyword id="KW-0002">3D-structure</keyword>
<keyword id="KW-0067">ATP-binding</keyword>
<keyword id="KW-1003">Cell membrane</keyword>
<keyword id="KW-0418">Kinase</keyword>
<keyword id="KW-0472">Membrane</keyword>
<keyword id="KW-0547">Nucleotide-binding</keyword>
<keyword id="KW-0597">Phosphoprotein</keyword>
<keyword id="KW-1185">Reference proteome</keyword>
<keyword id="KW-0808">Transferase</keyword>
<keyword id="KW-0812">Transmembrane</keyword>
<keyword id="KW-1133">Transmembrane helix</keyword>
<keyword id="KW-0902">Two-component regulatory system</keyword>
<reference key="1">
    <citation type="journal article" date="1997" name="DNA Res.">
        <title>Sequence analysis of the 36-kb region between gntZ and trnY genes of Bacillus subtilis genome.</title>
        <authorList>
            <person name="Kasahara Y."/>
            <person name="Nakai S."/>
            <person name="Ogasawara N."/>
        </authorList>
    </citation>
    <scope>NUCLEOTIDE SEQUENCE [GENOMIC DNA]</scope>
    <source>
        <strain>168</strain>
    </source>
</reference>
<reference key="2">
    <citation type="journal article" date="1997" name="Nature">
        <title>The complete genome sequence of the Gram-positive bacterium Bacillus subtilis.</title>
        <authorList>
            <person name="Kunst F."/>
            <person name="Ogasawara N."/>
            <person name="Moszer I."/>
            <person name="Albertini A.M."/>
            <person name="Alloni G."/>
            <person name="Azevedo V."/>
            <person name="Bertero M.G."/>
            <person name="Bessieres P."/>
            <person name="Bolotin A."/>
            <person name="Borchert S."/>
            <person name="Borriss R."/>
            <person name="Boursier L."/>
            <person name="Brans A."/>
            <person name="Braun M."/>
            <person name="Brignell S.C."/>
            <person name="Bron S."/>
            <person name="Brouillet S."/>
            <person name="Bruschi C.V."/>
            <person name="Caldwell B."/>
            <person name="Capuano V."/>
            <person name="Carter N.M."/>
            <person name="Choi S.-K."/>
            <person name="Codani J.-J."/>
            <person name="Connerton I.F."/>
            <person name="Cummings N.J."/>
            <person name="Daniel R.A."/>
            <person name="Denizot F."/>
            <person name="Devine K.M."/>
            <person name="Duesterhoeft A."/>
            <person name="Ehrlich S.D."/>
            <person name="Emmerson P.T."/>
            <person name="Entian K.-D."/>
            <person name="Errington J."/>
            <person name="Fabret C."/>
            <person name="Ferrari E."/>
            <person name="Foulger D."/>
            <person name="Fritz C."/>
            <person name="Fujita M."/>
            <person name="Fujita Y."/>
            <person name="Fuma S."/>
            <person name="Galizzi A."/>
            <person name="Galleron N."/>
            <person name="Ghim S.-Y."/>
            <person name="Glaser P."/>
            <person name="Goffeau A."/>
            <person name="Golightly E.J."/>
            <person name="Grandi G."/>
            <person name="Guiseppi G."/>
            <person name="Guy B.J."/>
            <person name="Haga K."/>
            <person name="Haiech J."/>
            <person name="Harwood C.R."/>
            <person name="Henaut A."/>
            <person name="Hilbert H."/>
            <person name="Holsappel S."/>
            <person name="Hosono S."/>
            <person name="Hullo M.-F."/>
            <person name="Itaya M."/>
            <person name="Jones L.-M."/>
            <person name="Joris B."/>
            <person name="Karamata D."/>
            <person name="Kasahara Y."/>
            <person name="Klaerr-Blanchard M."/>
            <person name="Klein C."/>
            <person name="Kobayashi Y."/>
            <person name="Koetter P."/>
            <person name="Koningstein G."/>
            <person name="Krogh S."/>
            <person name="Kumano M."/>
            <person name="Kurita K."/>
            <person name="Lapidus A."/>
            <person name="Lardinois S."/>
            <person name="Lauber J."/>
            <person name="Lazarevic V."/>
            <person name="Lee S.-M."/>
            <person name="Levine A."/>
            <person name="Liu H."/>
            <person name="Masuda S."/>
            <person name="Mauel C."/>
            <person name="Medigue C."/>
            <person name="Medina N."/>
            <person name="Mellado R.P."/>
            <person name="Mizuno M."/>
            <person name="Moestl D."/>
            <person name="Nakai S."/>
            <person name="Noback M."/>
            <person name="Noone D."/>
            <person name="O'Reilly M."/>
            <person name="Ogawa K."/>
            <person name="Ogiwara A."/>
            <person name="Oudega B."/>
            <person name="Park S.-H."/>
            <person name="Parro V."/>
            <person name="Pohl T.M."/>
            <person name="Portetelle D."/>
            <person name="Porwollik S."/>
            <person name="Prescott A.M."/>
            <person name="Presecan E."/>
            <person name="Pujic P."/>
            <person name="Purnelle B."/>
            <person name="Rapoport G."/>
            <person name="Rey M."/>
            <person name="Reynolds S."/>
            <person name="Rieger M."/>
            <person name="Rivolta C."/>
            <person name="Rocha E."/>
            <person name="Roche B."/>
            <person name="Rose M."/>
            <person name="Sadaie Y."/>
            <person name="Sato T."/>
            <person name="Scanlan E."/>
            <person name="Schleich S."/>
            <person name="Schroeter R."/>
            <person name="Scoffone F."/>
            <person name="Sekiguchi J."/>
            <person name="Sekowska A."/>
            <person name="Seror S.J."/>
            <person name="Serror P."/>
            <person name="Shin B.-S."/>
            <person name="Soldo B."/>
            <person name="Sorokin A."/>
            <person name="Tacconi E."/>
            <person name="Takagi T."/>
            <person name="Takahashi H."/>
            <person name="Takemaru K."/>
            <person name="Takeuchi M."/>
            <person name="Tamakoshi A."/>
            <person name="Tanaka T."/>
            <person name="Terpstra P."/>
            <person name="Tognoni A."/>
            <person name="Tosato V."/>
            <person name="Uchiyama S."/>
            <person name="Vandenbol M."/>
            <person name="Vannier F."/>
            <person name="Vassarotti A."/>
            <person name="Viari A."/>
            <person name="Wambutt R."/>
            <person name="Wedler E."/>
            <person name="Wedler H."/>
            <person name="Weitzenegger T."/>
            <person name="Winters P."/>
            <person name="Wipat A."/>
            <person name="Yamamoto H."/>
            <person name="Yamane K."/>
            <person name="Yasumoto K."/>
            <person name="Yata K."/>
            <person name="Yoshida K."/>
            <person name="Yoshikawa H.-F."/>
            <person name="Zumstein E."/>
            <person name="Yoshikawa H."/>
            <person name="Danchin A."/>
        </authorList>
    </citation>
    <scope>NUCLEOTIDE SEQUENCE [LARGE SCALE GENOMIC DNA]</scope>
    <source>
        <strain>168</strain>
    </source>
</reference>
<reference key="3">
    <citation type="journal article" date="1998" name="J. Bacteriol.">
        <title>A two-component signal transduction system essential for growth of Bacillus subtilis: implications for anti-infective therapy.</title>
        <authorList>
            <person name="Fabret C."/>
            <person name="Hoch J.A."/>
        </authorList>
    </citation>
    <scope>FUNCTION</scope>
    <source>
        <strain>168 / JH642</strain>
    </source>
</reference>
<reference key="4">
    <citation type="journal article" date="2000" name="Microbiology">
        <title>The essential two-component regulatory system encoded by yycF and yycG modulates expression of the ftsAZ operon in Bacillus subtilis.</title>
        <authorList>
            <person name="Fukuchi K."/>
            <person name="Kasahara Y."/>
            <person name="Asai K."/>
            <person name="Kobayashi K."/>
            <person name="Moriya S."/>
            <person name="Ogasawara N."/>
        </authorList>
    </citation>
    <scope>FUNCTION</scope>
    <source>
        <strain>168</strain>
    </source>
</reference>
<reference key="5">
    <citation type="journal article" date="2001" name="Biosci. Biotechnol. Biochem.">
        <title>Antibacterial agents that inhibit histidine protein kinase YycG of Bacillus subtilis.</title>
        <authorList>
            <person name="Yamamoto K."/>
            <person name="Kitayama T."/>
            <person name="Minagawa S."/>
            <person name="Watanabe T."/>
            <person name="Sawada S."/>
            <person name="Okamoto T."/>
            <person name="Utsumi R."/>
        </authorList>
    </citation>
    <scope>FUNCTION</scope>
    <scope>PHOSPHORYLATION AT HIS-386</scope>
    <scope>CATALYTIC ACTIVITY</scope>
    <scope>MUTAGENESIS OF HIS-386</scope>
    <scope>INHIBITION BY IMIDAZOLE AND ZERUMBONE DERIVATIVES</scope>
</reference>
<reference key="6">
    <citation type="journal article" date="2003" name="Mol. Microbiol.">
        <title>Genes controlled by the essential YycG/YycF two-component system of Bacillus subtilis revealed through a novel hybrid regulator approach.</title>
        <authorList>
            <person name="Howell A."/>
            <person name="Dubrac S."/>
            <person name="Andersen K.K."/>
            <person name="Noone D."/>
            <person name="Fert J."/>
            <person name="Msadek T."/>
            <person name="Devine K."/>
        </authorList>
    </citation>
    <scope>STUDY OF THE WALR/WALK REGULON</scope>
</reference>
<reference key="7">
    <citation type="journal article" date="2007" name="J. Bacteriol.">
        <title>YycH and YycI interact to regulate the essential YycFG two-component system in Bacillus subtilis.</title>
        <authorList>
            <person name="Szurmant H."/>
            <person name="Mohan M.A."/>
            <person name="Imus P.M."/>
            <person name="Hoch J.A."/>
        </authorList>
    </citation>
    <scope>INTERACTION WITH YYCH AND YYCI</scope>
    <scope>SUBUNIT</scope>
</reference>
<reference key="8">
    <citation type="journal article" date="2007" name="Mol. Microbiol.">
        <title>The essential YycFG two-component system controls cell wall metabolism in Bacillus subtilis.</title>
        <authorList>
            <person name="Bisicchia P."/>
            <person name="Noone D."/>
            <person name="Lioliou E."/>
            <person name="Howell A."/>
            <person name="Quigley S."/>
            <person name="Jensen T."/>
            <person name="Jarmer H."/>
            <person name="Devine K.M."/>
        </authorList>
    </citation>
    <scope>FUNCTION</scope>
</reference>
<protein>
    <recommendedName>
        <fullName evidence="12">Sensor histidine kinase WalK</fullName>
        <ecNumber evidence="7">2.7.13.3</ecNumber>
    </recommendedName>
</protein>
<dbReference type="EC" id="2.7.13.3" evidence="7"/>
<dbReference type="EMBL" id="D78193">
    <property type="protein sequence ID" value="BAA11299.1"/>
    <property type="molecule type" value="Genomic_DNA"/>
</dbReference>
<dbReference type="EMBL" id="AL009126">
    <property type="protein sequence ID" value="CAB16077.1"/>
    <property type="molecule type" value="Genomic_DNA"/>
</dbReference>
<dbReference type="PIR" id="F70089">
    <property type="entry name" value="F70089"/>
</dbReference>
<dbReference type="RefSeq" id="NP_391920.1">
    <property type="nucleotide sequence ID" value="NC_000964.3"/>
</dbReference>
<dbReference type="RefSeq" id="WP_009968432.1">
    <property type="nucleotide sequence ID" value="NZ_OZ025638.1"/>
</dbReference>
<dbReference type="PDB" id="3SL2">
    <property type="method" value="X-ray"/>
    <property type="resolution" value="1.61 A"/>
    <property type="chains" value="A=451-611"/>
</dbReference>
<dbReference type="PDBsum" id="3SL2"/>
<dbReference type="SMR" id="Q45614"/>
<dbReference type="FunCoup" id="Q45614">
    <property type="interactions" value="440"/>
</dbReference>
<dbReference type="IntAct" id="Q45614">
    <property type="interactions" value="2"/>
</dbReference>
<dbReference type="STRING" id="224308.BSU40400"/>
<dbReference type="BindingDB" id="Q45614"/>
<dbReference type="ChEMBL" id="CHEMBL1075059"/>
<dbReference type="iPTMnet" id="Q45614"/>
<dbReference type="PaxDb" id="224308-BSU40400"/>
<dbReference type="DNASU" id="937793"/>
<dbReference type="EnsemblBacteria" id="CAB16077">
    <property type="protein sequence ID" value="CAB16077"/>
    <property type="gene ID" value="BSU_40400"/>
</dbReference>
<dbReference type="GeneID" id="937793"/>
<dbReference type="KEGG" id="bsu:BSU40400"/>
<dbReference type="PATRIC" id="fig|224308.179.peg.4373"/>
<dbReference type="eggNOG" id="COG5002">
    <property type="taxonomic scope" value="Bacteria"/>
</dbReference>
<dbReference type="InParanoid" id="Q45614"/>
<dbReference type="OrthoDB" id="9813151at2"/>
<dbReference type="PhylomeDB" id="Q45614"/>
<dbReference type="BioCyc" id="BSUB:BSU40400-MONOMER"/>
<dbReference type="BRENDA" id="2.7.13.3">
    <property type="organism ID" value="658"/>
</dbReference>
<dbReference type="EvolutionaryTrace" id="Q45614"/>
<dbReference type="PRO" id="PR:Q45614"/>
<dbReference type="Proteomes" id="UP000001570">
    <property type="component" value="Chromosome"/>
</dbReference>
<dbReference type="GO" id="GO:0005886">
    <property type="term" value="C:plasma membrane"/>
    <property type="evidence" value="ECO:0007669"/>
    <property type="project" value="UniProtKB-SubCell"/>
</dbReference>
<dbReference type="GO" id="GO:0005524">
    <property type="term" value="F:ATP binding"/>
    <property type="evidence" value="ECO:0007669"/>
    <property type="project" value="UniProtKB-KW"/>
</dbReference>
<dbReference type="GO" id="GO:0000156">
    <property type="term" value="F:phosphorelay response regulator activity"/>
    <property type="evidence" value="ECO:0000318"/>
    <property type="project" value="GO_Central"/>
</dbReference>
<dbReference type="GO" id="GO:0000155">
    <property type="term" value="F:phosphorelay sensor kinase activity"/>
    <property type="evidence" value="ECO:0007669"/>
    <property type="project" value="InterPro"/>
</dbReference>
<dbReference type="GO" id="GO:0030295">
    <property type="term" value="F:protein kinase activator activity"/>
    <property type="evidence" value="ECO:0000318"/>
    <property type="project" value="GO_Central"/>
</dbReference>
<dbReference type="GO" id="GO:0007234">
    <property type="term" value="P:osmosensory signaling via phosphorelay pathway"/>
    <property type="evidence" value="ECO:0000318"/>
    <property type="project" value="GO_Central"/>
</dbReference>
<dbReference type="CDD" id="cd06225">
    <property type="entry name" value="HAMP"/>
    <property type="match status" value="1"/>
</dbReference>
<dbReference type="CDD" id="cd00075">
    <property type="entry name" value="HATPase"/>
    <property type="match status" value="1"/>
</dbReference>
<dbReference type="CDD" id="cd00082">
    <property type="entry name" value="HisKA"/>
    <property type="match status" value="1"/>
</dbReference>
<dbReference type="CDD" id="cd00130">
    <property type="entry name" value="PAS"/>
    <property type="match status" value="1"/>
</dbReference>
<dbReference type="FunFam" id="3.30.565.10:FF:000006">
    <property type="entry name" value="Sensor histidine kinase WalK"/>
    <property type="match status" value="1"/>
</dbReference>
<dbReference type="FunFam" id="1.10.287.130:FF:000001">
    <property type="entry name" value="Two-component sensor histidine kinase"/>
    <property type="match status" value="1"/>
</dbReference>
<dbReference type="Gene3D" id="1.10.287.130">
    <property type="match status" value="1"/>
</dbReference>
<dbReference type="Gene3D" id="1.10.8.500">
    <property type="entry name" value="HAMP domain in histidine kinase"/>
    <property type="match status" value="1"/>
</dbReference>
<dbReference type="Gene3D" id="3.30.565.10">
    <property type="entry name" value="Histidine kinase-like ATPase, C-terminal domain"/>
    <property type="match status" value="1"/>
</dbReference>
<dbReference type="Gene3D" id="3.30.450.20">
    <property type="entry name" value="PAS domain"/>
    <property type="match status" value="2"/>
</dbReference>
<dbReference type="InterPro" id="IPR050351">
    <property type="entry name" value="2-comp_sensor_kinase"/>
</dbReference>
<dbReference type="InterPro" id="IPR003660">
    <property type="entry name" value="HAMP_dom"/>
</dbReference>
<dbReference type="InterPro" id="IPR036890">
    <property type="entry name" value="HATPase_C_sf"/>
</dbReference>
<dbReference type="InterPro" id="IPR005467">
    <property type="entry name" value="His_kinase_dom"/>
</dbReference>
<dbReference type="InterPro" id="IPR003661">
    <property type="entry name" value="HisK_dim/P_dom"/>
</dbReference>
<dbReference type="InterPro" id="IPR036097">
    <property type="entry name" value="HisK_dim/P_sf"/>
</dbReference>
<dbReference type="InterPro" id="IPR001610">
    <property type="entry name" value="PAC"/>
</dbReference>
<dbReference type="InterPro" id="IPR000014">
    <property type="entry name" value="PAS"/>
</dbReference>
<dbReference type="InterPro" id="IPR000700">
    <property type="entry name" value="PAS-assoc_C"/>
</dbReference>
<dbReference type="InterPro" id="IPR035965">
    <property type="entry name" value="PAS-like_dom_sf"/>
</dbReference>
<dbReference type="InterPro" id="IPR049814">
    <property type="entry name" value="Resp_reg_WalK"/>
</dbReference>
<dbReference type="InterPro" id="IPR004358">
    <property type="entry name" value="Sig_transdc_His_kin-like_C"/>
</dbReference>
<dbReference type="NCBIfam" id="NF033092">
    <property type="entry name" value="HK_WalK"/>
    <property type="match status" value="1"/>
</dbReference>
<dbReference type="PANTHER" id="PTHR45453">
    <property type="entry name" value="PHOSPHATE REGULON SENSOR PROTEIN PHOR"/>
    <property type="match status" value="1"/>
</dbReference>
<dbReference type="PANTHER" id="PTHR45453:SF1">
    <property type="entry name" value="PHOSPHATE REGULON SENSOR PROTEIN PHOR"/>
    <property type="match status" value="1"/>
</dbReference>
<dbReference type="Pfam" id="PF23846">
    <property type="entry name" value="Cache_WalK"/>
    <property type="match status" value="1"/>
</dbReference>
<dbReference type="Pfam" id="PF00672">
    <property type="entry name" value="HAMP"/>
    <property type="match status" value="1"/>
</dbReference>
<dbReference type="Pfam" id="PF02518">
    <property type="entry name" value="HATPase_c"/>
    <property type="match status" value="1"/>
</dbReference>
<dbReference type="Pfam" id="PF00512">
    <property type="entry name" value="HisKA"/>
    <property type="match status" value="1"/>
</dbReference>
<dbReference type="Pfam" id="PF13426">
    <property type="entry name" value="PAS_9"/>
    <property type="match status" value="1"/>
</dbReference>
<dbReference type="PRINTS" id="PR00344">
    <property type="entry name" value="BCTRLSENSOR"/>
</dbReference>
<dbReference type="SMART" id="SM00304">
    <property type="entry name" value="HAMP"/>
    <property type="match status" value="1"/>
</dbReference>
<dbReference type="SMART" id="SM00387">
    <property type="entry name" value="HATPase_c"/>
    <property type="match status" value="1"/>
</dbReference>
<dbReference type="SMART" id="SM00388">
    <property type="entry name" value="HisKA"/>
    <property type="match status" value="1"/>
</dbReference>
<dbReference type="SMART" id="SM00086">
    <property type="entry name" value="PAC"/>
    <property type="match status" value="1"/>
</dbReference>
<dbReference type="SMART" id="SM00091">
    <property type="entry name" value="PAS"/>
    <property type="match status" value="1"/>
</dbReference>
<dbReference type="SUPFAM" id="SSF55874">
    <property type="entry name" value="ATPase domain of HSP90 chaperone/DNA topoisomerase II/histidine kinase"/>
    <property type="match status" value="1"/>
</dbReference>
<dbReference type="SUPFAM" id="SSF158472">
    <property type="entry name" value="HAMP domain-like"/>
    <property type="match status" value="1"/>
</dbReference>
<dbReference type="SUPFAM" id="SSF47384">
    <property type="entry name" value="Homodimeric domain of signal transducing histidine kinase"/>
    <property type="match status" value="1"/>
</dbReference>
<dbReference type="SUPFAM" id="SSF55785">
    <property type="entry name" value="PYP-like sensor domain (PAS domain)"/>
    <property type="match status" value="1"/>
</dbReference>
<dbReference type="PROSITE" id="PS50885">
    <property type="entry name" value="HAMP"/>
    <property type="match status" value="1"/>
</dbReference>
<dbReference type="PROSITE" id="PS50109">
    <property type="entry name" value="HIS_KIN"/>
    <property type="match status" value="1"/>
</dbReference>
<dbReference type="PROSITE" id="PS50113">
    <property type="entry name" value="PAC"/>
    <property type="match status" value="1"/>
</dbReference>
<comment type="function">
    <text evidence="6 7 8 10 11">Member of the two-component regulatory system WalK/WalR involved in the regulation of the ftsAZ operon, the yocH and ykvT, cwlO, lytE, ydjM, yjeA, yoeB genes and the tagAB and tagDEF operons. Phosphorylates WalR.</text>
</comment>
<comment type="catalytic activity">
    <reaction evidence="7">
        <text>ATP + protein L-histidine = ADP + protein N-phospho-L-histidine.</text>
        <dbReference type="EC" id="2.7.13.3"/>
    </reaction>
</comment>
<comment type="subunit">
    <text evidence="9">Homodimer. Interacts with YycH and YycI.</text>
</comment>
<comment type="subcellular location">
    <subcellularLocation>
        <location evidence="12">Cell membrane</location>
        <topology evidence="2">Multi-pass membrane protein</topology>
    </subcellularLocation>
</comment>
<comment type="developmental stage">
    <text>Expressed during exponential growth and shut down at the entry into stationary phase.</text>
</comment>
<comment type="PTM">
    <text evidence="7">Autophosphorylated.</text>
</comment>
<comment type="miscellaneous">
    <text evidence="7">The imidazole derivatives NH125, NH126 and NH127 inhibited the incorporation of phosphate from ATP at 50 ug/ml. The zerumbone derivative NH0891 inhibited WalK.</text>
</comment>